<sequence>MEELQGYLKKNGSPQQHFLYPLLLQEYIYTLAHDHGLNSSIFYESIEFIGYDNKSSLVLVKRLITRMYQQNLFIYSVNDSNQNRFGGHTNFFYSHFFYSQMVSESFSVIVEIPFSLRLVSSLEEEEKEIPKSQNLRSIHSIFPFLEDKLFHLNNVSDILIPHPIHLEILVQTLQYWIQDVPSLHLLRFFLHKYHNLNSFIQNNKTIYVFSKENKRLFWFLYNSYVSECEFLFVFIRKKSCYLRSTSSGAFLERSHFYGKKEHIIVVCCNNFQKTLCPVKDLFMHYVRYQGKAILASRGTHLLMKKWRYYLVNFWQYYFHFWSQPYRMQINPLLNYSFYFMGYLSSVLINPYAVKNQMLENSFLIDTDINKFDTIIPGIPLIGSLSKVKFCTVSGHPISKPGWADLSDFDIIDRFGRICRNLSHYHSGSSKKQTLYRIKYILRLSCARTLARKHKSTARALLQRLGSGLVEEFFTEEEQFISFIFPKTTPFPLHGSHRERIWSLDIIRVNDLVNQII</sequence>
<proteinExistence type="inferred from homology"/>
<gene>
    <name evidence="1" type="primary">matK</name>
</gene>
<geneLocation type="chloroplast"/>
<organism>
    <name type="scientific">Medeola virginiana</name>
    <name type="common">Indian cucumber root</name>
    <dbReference type="NCBI Taxonomy" id="4694"/>
    <lineage>
        <taxon>Eukaryota</taxon>
        <taxon>Viridiplantae</taxon>
        <taxon>Streptophyta</taxon>
        <taxon>Embryophyta</taxon>
        <taxon>Tracheophyta</taxon>
        <taxon>Spermatophyta</taxon>
        <taxon>Magnoliopsida</taxon>
        <taxon>Liliopsida</taxon>
        <taxon>Liliales</taxon>
        <taxon>Liliaceae</taxon>
        <taxon>Medeola</taxon>
    </lineage>
</organism>
<accession>Q9TMB2</accession>
<name>MATK_MEDVI</name>
<feature type="chain" id="PRO_0000143510" description="Maturase K">
    <location>
        <begin position="1"/>
        <end position="516"/>
    </location>
</feature>
<keyword id="KW-0150">Chloroplast</keyword>
<keyword id="KW-0507">mRNA processing</keyword>
<keyword id="KW-0934">Plastid</keyword>
<keyword id="KW-0694">RNA-binding</keyword>
<keyword id="KW-0819">tRNA processing</keyword>
<comment type="function">
    <text evidence="1">Usually encoded in the trnK tRNA gene intron. Probably assists in splicing its own and other chloroplast group II introns.</text>
</comment>
<comment type="subcellular location">
    <subcellularLocation>
        <location>Plastid</location>
        <location>Chloroplast</location>
    </subcellularLocation>
</comment>
<comment type="similarity">
    <text evidence="1">Belongs to the intron maturase 2 family. MatK subfamily.</text>
</comment>
<reference key="1">
    <citation type="submission" date="1999-03" db="EMBL/GenBank/DDBJ databases">
        <title>Molecular systematics of the genus Uvularia and selected Liliales based upon matK and rbcL gene sequences data.</title>
        <authorList>
            <person name="Hayashi K."/>
            <person name="Yoshida S."/>
            <person name="Kato H."/>
            <person name="Utech F.H."/>
            <person name="Whigham D.F."/>
            <person name="Kawano S."/>
        </authorList>
    </citation>
    <scope>NUCLEOTIDE SEQUENCE [GENOMIC DNA]</scope>
</reference>
<dbReference type="EMBL" id="AB024547">
    <property type="protein sequence ID" value="BAA84556.1"/>
    <property type="molecule type" value="Genomic_DNA"/>
</dbReference>
<dbReference type="GO" id="GO:0009507">
    <property type="term" value="C:chloroplast"/>
    <property type="evidence" value="ECO:0007669"/>
    <property type="project" value="UniProtKB-SubCell"/>
</dbReference>
<dbReference type="GO" id="GO:0003723">
    <property type="term" value="F:RNA binding"/>
    <property type="evidence" value="ECO:0007669"/>
    <property type="project" value="UniProtKB-KW"/>
</dbReference>
<dbReference type="GO" id="GO:0006397">
    <property type="term" value="P:mRNA processing"/>
    <property type="evidence" value="ECO:0007669"/>
    <property type="project" value="UniProtKB-KW"/>
</dbReference>
<dbReference type="GO" id="GO:0008380">
    <property type="term" value="P:RNA splicing"/>
    <property type="evidence" value="ECO:0007669"/>
    <property type="project" value="UniProtKB-UniRule"/>
</dbReference>
<dbReference type="GO" id="GO:0008033">
    <property type="term" value="P:tRNA processing"/>
    <property type="evidence" value="ECO:0007669"/>
    <property type="project" value="UniProtKB-KW"/>
</dbReference>
<dbReference type="HAMAP" id="MF_01390">
    <property type="entry name" value="MatK"/>
    <property type="match status" value="1"/>
</dbReference>
<dbReference type="InterPro" id="IPR024937">
    <property type="entry name" value="Domain_X"/>
</dbReference>
<dbReference type="InterPro" id="IPR002866">
    <property type="entry name" value="Maturase_MatK"/>
</dbReference>
<dbReference type="InterPro" id="IPR024942">
    <property type="entry name" value="Maturase_MatK_N"/>
</dbReference>
<dbReference type="PANTHER" id="PTHR34811">
    <property type="entry name" value="MATURASE K"/>
    <property type="match status" value="1"/>
</dbReference>
<dbReference type="PANTHER" id="PTHR34811:SF1">
    <property type="entry name" value="MATURASE K"/>
    <property type="match status" value="1"/>
</dbReference>
<dbReference type="Pfam" id="PF01348">
    <property type="entry name" value="Intron_maturas2"/>
    <property type="match status" value="1"/>
</dbReference>
<dbReference type="Pfam" id="PF01824">
    <property type="entry name" value="MatK_N"/>
    <property type="match status" value="1"/>
</dbReference>
<evidence type="ECO:0000255" key="1">
    <source>
        <dbReference type="HAMAP-Rule" id="MF_01390"/>
    </source>
</evidence>
<protein>
    <recommendedName>
        <fullName evidence="1">Maturase K</fullName>
    </recommendedName>
    <alternativeName>
        <fullName evidence="1">Intron maturase</fullName>
    </alternativeName>
</protein>